<keyword id="KW-0665">Pyrimidine biosynthesis</keyword>
<keyword id="KW-1185">Reference proteome</keyword>
<keyword id="KW-0808">Transferase</keyword>
<proteinExistence type="inferred from homology"/>
<evidence type="ECO:0000255" key="1">
    <source>
        <dbReference type="HAMAP-Rule" id="MF_00001"/>
    </source>
</evidence>
<evidence type="ECO:0000305" key="2"/>
<reference key="1">
    <citation type="journal article" date="2006" name="J. Bacteriol.">
        <title>Genome sequence of Aeromonas hydrophila ATCC 7966T: jack of all trades.</title>
        <authorList>
            <person name="Seshadri R."/>
            <person name="Joseph S.W."/>
            <person name="Chopra A.K."/>
            <person name="Sha J."/>
            <person name="Shaw J."/>
            <person name="Graf J."/>
            <person name="Haft D.H."/>
            <person name="Wu M."/>
            <person name="Ren Q."/>
            <person name="Rosovitz M.J."/>
            <person name="Madupu R."/>
            <person name="Tallon L."/>
            <person name="Kim M."/>
            <person name="Jin S."/>
            <person name="Vuong H."/>
            <person name="Stine O.C."/>
            <person name="Ali A."/>
            <person name="Horneman A.J."/>
            <person name="Heidelberg J.F."/>
        </authorList>
    </citation>
    <scope>NUCLEOTIDE SEQUENCE [LARGE SCALE GENOMIC DNA]</scope>
    <source>
        <strain>ATCC 7966 / DSM 30187 / BCRC 13018 / CCUG 14551 / JCM 1027 / KCTC 2358 / NCIMB 9240 / NCTC 8049</strain>
    </source>
</reference>
<gene>
    <name evidence="1" type="primary">pyrB</name>
    <name type="ordered locus">AHA_4087</name>
</gene>
<name>PYRB_AERHH</name>
<feature type="chain" id="PRO_0000321064" description="Aspartate carbamoyltransferase catalytic subunit">
    <location>
        <begin position="1"/>
        <end position="306"/>
    </location>
</feature>
<feature type="binding site" evidence="1">
    <location>
        <position position="55"/>
    </location>
    <ligand>
        <name>carbamoyl phosphate</name>
        <dbReference type="ChEBI" id="CHEBI:58228"/>
    </ligand>
</feature>
<feature type="binding site" evidence="1">
    <location>
        <position position="56"/>
    </location>
    <ligand>
        <name>carbamoyl phosphate</name>
        <dbReference type="ChEBI" id="CHEBI:58228"/>
    </ligand>
</feature>
<feature type="binding site" evidence="1">
    <location>
        <position position="84"/>
    </location>
    <ligand>
        <name>L-aspartate</name>
        <dbReference type="ChEBI" id="CHEBI:29991"/>
    </ligand>
</feature>
<feature type="binding site" evidence="1">
    <location>
        <position position="105"/>
    </location>
    <ligand>
        <name>carbamoyl phosphate</name>
        <dbReference type="ChEBI" id="CHEBI:58228"/>
    </ligand>
</feature>
<feature type="binding site" evidence="1">
    <location>
        <position position="133"/>
    </location>
    <ligand>
        <name>carbamoyl phosphate</name>
        <dbReference type="ChEBI" id="CHEBI:58228"/>
    </ligand>
</feature>
<feature type="binding site" evidence="1">
    <location>
        <position position="136"/>
    </location>
    <ligand>
        <name>carbamoyl phosphate</name>
        <dbReference type="ChEBI" id="CHEBI:58228"/>
    </ligand>
</feature>
<feature type="binding site" evidence="1">
    <location>
        <position position="166"/>
    </location>
    <ligand>
        <name>L-aspartate</name>
        <dbReference type="ChEBI" id="CHEBI:29991"/>
    </ligand>
</feature>
<feature type="binding site" evidence="1">
    <location>
        <position position="227"/>
    </location>
    <ligand>
        <name>L-aspartate</name>
        <dbReference type="ChEBI" id="CHEBI:29991"/>
    </ligand>
</feature>
<feature type="binding site" evidence="1">
    <location>
        <position position="265"/>
    </location>
    <ligand>
        <name>carbamoyl phosphate</name>
        <dbReference type="ChEBI" id="CHEBI:58228"/>
    </ligand>
</feature>
<feature type="binding site" evidence="1">
    <location>
        <position position="266"/>
    </location>
    <ligand>
        <name>carbamoyl phosphate</name>
        <dbReference type="ChEBI" id="CHEBI:58228"/>
    </ligand>
</feature>
<organism>
    <name type="scientific">Aeromonas hydrophila subsp. hydrophila (strain ATCC 7966 / DSM 30187 / BCRC 13018 / CCUG 14551 / JCM 1027 / KCTC 2358 / NCIMB 9240 / NCTC 8049)</name>
    <dbReference type="NCBI Taxonomy" id="380703"/>
    <lineage>
        <taxon>Bacteria</taxon>
        <taxon>Pseudomonadati</taxon>
        <taxon>Pseudomonadota</taxon>
        <taxon>Gammaproteobacteria</taxon>
        <taxon>Aeromonadales</taxon>
        <taxon>Aeromonadaceae</taxon>
        <taxon>Aeromonas</taxon>
    </lineage>
</organism>
<accession>A0KQG0</accession>
<comment type="function">
    <text evidence="1">Catalyzes the condensation of carbamoyl phosphate and aspartate to form carbamoyl aspartate and inorganic phosphate, the committed step in the de novo pyrimidine nucleotide biosynthesis pathway.</text>
</comment>
<comment type="catalytic activity">
    <reaction evidence="1">
        <text>carbamoyl phosphate + L-aspartate = N-carbamoyl-L-aspartate + phosphate + H(+)</text>
        <dbReference type="Rhea" id="RHEA:20013"/>
        <dbReference type="ChEBI" id="CHEBI:15378"/>
        <dbReference type="ChEBI" id="CHEBI:29991"/>
        <dbReference type="ChEBI" id="CHEBI:32814"/>
        <dbReference type="ChEBI" id="CHEBI:43474"/>
        <dbReference type="ChEBI" id="CHEBI:58228"/>
        <dbReference type="EC" id="2.1.3.2"/>
    </reaction>
</comment>
<comment type="pathway">
    <text evidence="1">Pyrimidine metabolism; UMP biosynthesis via de novo pathway; (S)-dihydroorotate from bicarbonate: step 2/3.</text>
</comment>
<comment type="subunit">
    <text evidence="1">Heterododecamer (2C3:3R2) of six catalytic PyrB chains organized as two trimers (C3), and six regulatory PyrI chains organized as three dimers (R2).</text>
</comment>
<comment type="similarity">
    <text evidence="1">Belongs to the aspartate/ornithine carbamoyltransferase superfamily. ATCase family.</text>
</comment>
<comment type="sequence caution" evidence="2">
    <conflict type="erroneous initiation">
        <sequence resource="EMBL-CDS" id="ABK38315"/>
    </conflict>
</comment>
<dbReference type="EC" id="2.1.3.2" evidence="1"/>
<dbReference type="EMBL" id="CP000462">
    <property type="protein sequence ID" value="ABK38315.1"/>
    <property type="status" value="ALT_INIT"/>
    <property type="molecule type" value="Genomic_DNA"/>
</dbReference>
<dbReference type="RefSeq" id="WP_016352301.1">
    <property type="nucleotide sequence ID" value="NC_008570.1"/>
</dbReference>
<dbReference type="RefSeq" id="YP_858511.1">
    <property type="nucleotide sequence ID" value="NC_008570.1"/>
</dbReference>
<dbReference type="SMR" id="A0KQG0"/>
<dbReference type="STRING" id="380703.AHA_4087"/>
<dbReference type="EnsemblBacteria" id="ABK38315">
    <property type="protein sequence ID" value="ABK38315"/>
    <property type="gene ID" value="AHA_4087"/>
</dbReference>
<dbReference type="GeneID" id="4490229"/>
<dbReference type="KEGG" id="aha:AHA_4087"/>
<dbReference type="PATRIC" id="fig|380703.7.peg.4043"/>
<dbReference type="eggNOG" id="COG0540">
    <property type="taxonomic scope" value="Bacteria"/>
</dbReference>
<dbReference type="HOGENOM" id="CLU_043846_1_2_6"/>
<dbReference type="OrthoDB" id="9774690at2"/>
<dbReference type="UniPathway" id="UPA00070">
    <property type="reaction ID" value="UER00116"/>
</dbReference>
<dbReference type="Proteomes" id="UP000000756">
    <property type="component" value="Chromosome"/>
</dbReference>
<dbReference type="GO" id="GO:0005829">
    <property type="term" value="C:cytosol"/>
    <property type="evidence" value="ECO:0007669"/>
    <property type="project" value="TreeGrafter"/>
</dbReference>
<dbReference type="GO" id="GO:0016597">
    <property type="term" value="F:amino acid binding"/>
    <property type="evidence" value="ECO:0007669"/>
    <property type="project" value="InterPro"/>
</dbReference>
<dbReference type="GO" id="GO:0004070">
    <property type="term" value="F:aspartate carbamoyltransferase activity"/>
    <property type="evidence" value="ECO:0007669"/>
    <property type="project" value="UniProtKB-UniRule"/>
</dbReference>
<dbReference type="GO" id="GO:0006207">
    <property type="term" value="P:'de novo' pyrimidine nucleobase biosynthetic process"/>
    <property type="evidence" value="ECO:0007669"/>
    <property type="project" value="InterPro"/>
</dbReference>
<dbReference type="GO" id="GO:0044205">
    <property type="term" value="P:'de novo' UMP biosynthetic process"/>
    <property type="evidence" value="ECO:0007669"/>
    <property type="project" value="UniProtKB-UniRule"/>
</dbReference>
<dbReference type="GO" id="GO:0006520">
    <property type="term" value="P:amino acid metabolic process"/>
    <property type="evidence" value="ECO:0007669"/>
    <property type="project" value="InterPro"/>
</dbReference>
<dbReference type="FunFam" id="3.40.50.1370:FF:000001">
    <property type="entry name" value="Aspartate carbamoyltransferase"/>
    <property type="match status" value="1"/>
</dbReference>
<dbReference type="FunFam" id="3.40.50.1370:FF:000002">
    <property type="entry name" value="Aspartate carbamoyltransferase 2"/>
    <property type="match status" value="1"/>
</dbReference>
<dbReference type="Gene3D" id="3.40.50.1370">
    <property type="entry name" value="Aspartate/ornithine carbamoyltransferase"/>
    <property type="match status" value="2"/>
</dbReference>
<dbReference type="HAMAP" id="MF_00001">
    <property type="entry name" value="Asp_carb_tr"/>
    <property type="match status" value="1"/>
</dbReference>
<dbReference type="InterPro" id="IPR006132">
    <property type="entry name" value="Asp/Orn_carbamoyltranf_P-bd"/>
</dbReference>
<dbReference type="InterPro" id="IPR006130">
    <property type="entry name" value="Asp/Orn_carbamoylTrfase"/>
</dbReference>
<dbReference type="InterPro" id="IPR036901">
    <property type="entry name" value="Asp/Orn_carbamoylTrfase_sf"/>
</dbReference>
<dbReference type="InterPro" id="IPR002082">
    <property type="entry name" value="Asp_carbamoyltransf"/>
</dbReference>
<dbReference type="InterPro" id="IPR006131">
    <property type="entry name" value="Asp_carbamoyltransf_Asp/Orn-bd"/>
</dbReference>
<dbReference type="NCBIfam" id="TIGR00670">
    <property type="entry name" value="asp_carb_tr"/>
    <property type="match status" value="1"/>
</dbReference>
<dbReference type="NCBIfam" id="NF002032">
    <property type="entry name" value="PRK00856.1"/>
    <property type="match status" value="1"/>
</dbReference>
<dbReference type="PANTHER" id="PTHR45753:SF6">
    <property type="entry name" value="ASPARTATE CARBAMOYLTRANSFERASE"/>
    <property type="match status" value="1"/>
</dbReference>
<dbReference type="PANTHER" id="PTHR45753">
    <property type="entry name" value="ORNITHINE CARBAMOYLTRANSFERASE, MITOCHONDRIAL"/>
    <property type="match status" value="1"/>
</dbReference>
<dbReference type="Pfam" id="PF00185">
    <property type="entry name" value="OTCace"/>
    <property type="match status" value="1"/>
</dbReference>
<dbReference type="Pfam" id="PF02729">
    <property type="entry name" value="OTCace_N"/>
    <property type="match status" value="1"/>
</dbReference>
<dbReference type="PRINTS" id="PR00100">
    <property type="entry name" value="AOTCASE"/>
</dbReference>
<dbReference type="PRINTS" id="PR00101">
    <property type="entry name" value="ATCASE"/>
</dbReference>
<dbReference type="SUPFAM" id="SSF53671">
    <property type="entry name" value="Aspartate/ornithine carbamoyltransferase"/>
    <property type="match status" value="1"/>
</dbReference>
<dbReference type="PROSITE" id="PS00097">
    <property type="entry name" value="CARBAMOYLTRANSFERASE"/>
    <property type="match status" value="1"/>
</dbReference>
<sequence>MTNPLYKKHVISISDLTRPDMELVVATAQRLKAEPDTRLLKDKLVASCFFEASTRTRLSFETAVQRLGGNIIGFADGGNTSAKKGETLADSIKIIGSYTDAVVMRHPKEGAARLASEFSRVPVINGGDGSNQHPTQTLLDLFSIHETQGKLDGLNVAFVGDLKYGRTVHSLAQALSLFNCRFFFISPEALAMPDYICEELEEKGIQFSVHETMEEVMPELDILYMTRVQKERFDETEYKHMAAKFVLEVATLEGAKPTMKILHPLPRVDEIDVAVDKTPHAYYFQQAENGVYARQALLALVLNETV</sequence>
<protein>
    <recommendedName>
        <fullName evidence="1">Aspartate carbamoyltransferase catalytic subunit</fullName>
        <ecNumber evidence="1">2.1.3.2</ecNumber>
    </recommendedName>
    <alternativeName>
        <fullName evidence="1">Aspartate transcarbamylase</fullName>
        <shortName evidence="1">ATCase</shortName>
    </alternativeName>
</protein>